<keyword id="KW-0378">Hydrolase</keyword>
<comment type="function">
    <text evidence="1">Hydrolyzes diadenosine 5',5'''-P1,P4-tetraphosphate to yield ADP.</text>
</comment>
<comment type="catalytic activity">
    <reaction evidence="1">
        <text>P(1),P(4)-bis(5'-adenosyl) tetraphosphate + H2O = 2 ADP + 2 H(+)</text>
        <dbReference type="Rhea" id="RHEA:24252"/>
        <dbReference type="ChEBI" id="CHEBI:15377"/>
        <dbReference type="ChEBI" id="CHEBI:15378"/>
        <dbReference type="ChEBI" id="CHEBI:58141"/>
        <dbReference type="ChEBI" id="CHEBI:456216"/>
        <dbReference type="EC" id="3.6.1.41"/>
    </reaction>
</comment>
<comment type="similarity">
    <text evidence="1">Belongs to the Ap4A hydrolase family.</text>
</comment>
<name>APAH_ECOBW</name>
<dbReference type="EC" id="3.6.1.41" evidence="1"/>
<dbReference type="EMBL" id="CP001396">
    <property type="protein sequence ID" value="ACR62755.1"/>
    <property type="molecule type" value="Genomic_DNA"/>
</dbReference>
<dbReference type="RefSeq" id="WP_000257192.1">
    <property type="nucleotide sequence ID" value="NC_012759.1"/>
</dbReference>
<dbReference type="SMR" id="C4ZPX5"/>
<dbReference type="GeneID" id="93777386"/>
<dbReference type="KEGG" id="ebw:BWG_0047"/>
<dbReference type="HOGENOM" id="CLU_056184_2_0_6"/>
<dbReference type="GO" id="GO:0008803">
    <property type="term" value="F:bis(5'-nucleosyl)-tetraphosphatase (symmetrical) activity"/>
    <property type="evidence" value="ECO:0007669"/>
    <property type="project" value="UniProtKB-UniRule"/>
</dbReference>
<dbReference type="CDD" id="cd07422">
    <property type="entry name" value="MPP_ApaH"/>
    <property type="match status" value="1"/>
</dbReference>
<dbReference type="FunFam" id="3.60.21.10:FF:000013">
    <property type="entry name" value="Bis(5'-nucleosyl)-tetraphosphatase, symmetrical"/>
    <property type="match status" value="1"/>
</dbReference>
<dbReference type="Gene3D" id="3.60.21.10">
    <property type="match status" value="1"/>
</dbReference>
<dbReference type="HAMAP" id="MF_00199">
    <property type="entry name" value="ApaH"/>
    <property type="match status" value="1"/>
</dbReference>
<dbReference type="InterPro" id="IPR004617">
    <property type="entry name" value="ApaH"/>
</dbReference>
<dbReference type="InterPro" id="IPR004843">
    <property type="entry name" value="Calcineurin-like_PHP_ApaH"/>
</dbReference>
<dbReference type="InterPro" id="IPR029052">
    <property type="entry name" value="Metallo-depent_PP-like"/>
</dbReference>
<dbReference type="NCBIfam" id="TIGR00668">
    <property type="entry name" value="apaH"/>
    <property type="match status" value="1"/>
</dbReference>
<dbReference type="NCBIfam" id="NF001204">
    <property type="entry name" value="PRK00166.1"/>
    <property type="match status" value="1"/>
</dbReference>
<dbReference type="PANTHER" id="PTHR40942">
    <property type="match status" value="1"/>
</dbReference>
<dbReference type="PANTHER" id="PTHR40942:SF4">
    <property type="entry name" value="CYTOCHROME C5"/>
    <property type="match status" value="1"/>
</dbReference>
<dbReference type="Pfam" id="PF00149">
    <property type="entry name" value="Metallophos"/>
    <property type="match status" value="1"/>
</dbReference>
<dbReference type="PIRSF" id="PIRSF000903">
    <property type="entry name" value="B5n-ttraPtase_sm"/>
    <property type="match status" value="1"/>
</dbReference>
<dbReference type="SUPFAM" id="SSF56300">
    <property type="entry name" value="Metallo-dependent phosphatases"/>
    <property type="match status" value="1"/>
</dbReference>
<reference key="1">
    <citation type="journal article" date="2009" name="J. Bacteriol.">
        <title>Genomic sequencing reveals regulatory mutations and recombinational events in the widely used MC4100 lineage of Escherichia coli K-12.</title>
        <authorList>
            <person name="Ferenci T."/>
            <person name="Zhou Z."/>
            <person name="Betteridge T."/>
            <person name="Ren Y."/>
            <person name="Liu Y."/>
            <person name="Feng L."/>
            <person name="Reeves P.R."/>
            <person name="Wang L."/>
        </authorList>
    </citation>
    <scope>NUCLEOTIDE SEQUENCE [LARGE SCALE GENOMIC DNA]</scope>
    <source>
        <strain>K12 / MC4100 / BW2952</strain>
    </source>
</reference>
<gene>
    <name evidence="1" type="primary">apaH</name>
    <name type="ordered locus">BWG_0047</name>
</gene>
<accession>C4ZPX5</accession>
<sequence length="280" mass="31297">MATYLIGDVHGCYDELIALLHKVEFTPGKDTLWLTGDLVARGPGSLDVLRYVKSLGDSVRLVLGNHDLHLLAVFAGISRNKPKDRLTPLLEAPDADELLNWLRRQPLLQIDEEKKLVMAHAGITPQWDLQTAKECARDVEAVLSSDSYPFFLDAMYGDMPNNWSPELRGLGRLRFITNAFTRMRFCFPNGQLDMYSKESPEEAPAPLKPWFAIPGPVAEEYSIAFGHWASLEGKGTPEGIYALDTGCCWGGTLTCLRWEDKQYFVQPSNRHKDLGEAAAS</sequence>
<organism>
    <name type="scientific">Escherichia coli (strain K12 / MC4100 / BW2952)</name>
    <dbReference type="NCBI Taxonomy" id="595496"/>
    <lineage>
        <taxon>Bacteria</taxon>
        <taxon>Pseudomonadati</taxon>
        <taxon>Pseudomonadota</taxon>
        <taxon>Gammaproteobacteria</taxon>
        <taxon>Enterobacterales</taxon>
        <taxon>Enterobacteriaceae</taxon>
        <taxon>Escherichia</taxon>
    </lineage>
</organism>
<protein>
    <recommendedName>
        <fullName evidence="1">Bis(5'-nucleosyl)-tetraphosphatase, symmetrical</fullName>
        <ecNumber evidence="1">3.6.1.41</ecNumber>
    </recommendedName>
    <alternativeName>
        <fullName evidence="1">Ap4A hydrolase</fullName>
    </alternativeName>
    <alternativeName>
        <fullName evidence="1">Diadenosine 5',5'''-P1,P4-tetraphosphate pyrophosphohydrolase</fullName>
    </alternativeName>
    <alternativeName>
        <fullName evidence="1">Diadenosine tetraphosphatase</fullName>
    </alternativeName>
</protein>
<proteinExistence type="inferred from homology"/>
<evidence type="ECO:0000255" key="1">
    <source>
        <dbReference type="HAMAP-Rule" id="MF_00199"/>
    </source>
</evidence>
<feature type="chain" id="PRO_1000204084" description="Bis(5'-nucleosyl)-tetraphosphatase, symmetrical">
    <location>
        <begin position="1"/>
        <end position="280"/>
    </location>
</feature>